<dbReference type="EC" id="4.2.1.182" evidence="1"/>
<dbReference type="EMBL" id="AE010299">
    <property type="protein sequence ID" value="AAM03697.1"/>
    <property type="molecule type" value="Genomic_DNA"/>
</dbReference>
<dbReference type="RefSeq" id="WP_011020302.1">
    <property type="nucleotide sequence ID" value="NC_003552.1"/>
</dbReference>
<dbReference type="SMR" id="Q8TU30"/>
<dbReference type="FunCoup" id="Q8TU30">
    <property type="interactions" value="11"/>
</dbReference>
<dbReference type="STRING" id="188937.MA_0244"/>
<dbReference type="EnsemblBacteria" id="AAM03697">
    <property type="protein sequence ID" value="AAM03697"/>
    <property type="gene ID" value="MA_0244"/>
</dbReference>
<dbReference type="GeneID" id="1472136"/>
<dbReference type="KEGG" id="mac:MA_0244"/>
<dbReference type="HOGENOM" id="CLU_141583_2_0_2"/>
<dbReference type="InParanoid" id="Q8TU30"/>
<dbReference type="OrthoDB" id="18062at2157"/>
<dbReference type="PhylomeDB" id="Q8TU30"/>
<dbReference type="UniPathway" id="UPA00057"/>
<dbReference type="Proteomes" id="UP000002487">
    <property type="component" value="Chromosome"/>
</dbReference>
<dbReference type="GO" id="GO:0016836">
    <property type="term" value="F:hydro-lyase activity"/>
    <property type="evidence" value="ECO:0007669"/>
    <property type="project" value="UniProtKB-UniRule"/>
</dbReference>
<dbReference type="GO" id="GO:0019287">
    <property type="term" value="P:isopentenyl diphosphate biosynthetic process, mevalonate pathway"/>
    <property type="evidence" value="ECO:0007669"/>
    <property type="project" value="UniProtKB-UniRule"/>
</dbReference>
<dbReference type="CDD" id="cd01356">
    <property type="entry name" value="AcnX_swivel"/>
    <property type="match status" value="1"/>
</dbReference>
<dbReference type="Gene3D" id="3.50.30.10">
    <property type="entry name" value="Phosphohistidine domain"/>
    <property type="match status" value="1"/>
</dbReference>
<dbReference type="HAMAP" id="MF_00078">
    <property type="entry name" value="PMDh_S"/>
    <property type="match status" value="1"/>
</dbReference>
<dbReference type="InterPro" id="IPR012016">
    <property type="entry name" value="PMDh-S-like"/>
</dbReference>
<dbReference type="InterPro" id="IPR002840">
    <property type="entry name" value="PMDh-S-like_dom"/>
</dbReference>
<dbReference type="InterPro" id="IPR020794">
    <property type="entry name" value="PMDh_S"/>
</dbReference>
<dbReference type="NCBIfam" id="NF003046">
    <property type="entry name" value="PRK03955.1"/>
    <property type="match status" value="1"/>
</dbReference>
<dbReference type="PANTHER" id="PTHR36577">
    <property type="entry name" value="DUF521 DOMAIN PROTEIN (AFU_ORTHOLOGUE AFUA_6G00490)"/>
    <property type="match status" value="1"/>
</dbReference>
<dbReference type="PANTHER" id="PTHR36577:SF3">
    <property type="entry name" value="DUF521 DOMAIN PROTEIN (AFU_ORTHOLOGUE AFUA_6G00490)"/>
    <property type="match status" value="1"/>
</dbReference>
<dbReference type="Pfam" id="PF01989">
    <property type="entry name" value="AcnX_swivel_put"/>
    <property type="match status" value="1"/>
</dbReference>
<dbReference type="PIRSF" id="PIRSF004966">
    <property type="entry name" value="UCP004966"/>
    <property type="match status" value="1"/>
</dbReference>
<dbReference type="SUPFAM" id="SSF52016">
    <property type="entry name" value="LeuD/IlvD-like"/>
    <property type="match status" value="1"/>
</dbReference>
<proteinExistence type="inferred from homology"/>
<comment type="function">
    <text evidence="1">Component of a hydro-lyase that catalyzes the dehydration of mevalonate 5-phosphate (MVA5P) to form trans-anhydromevalonate 5-phosphate (tAHMP). Involved in the archaeal mevalonate (MVA) pathway, which provides fundamental precursors for isoprenoid biosynthesis, such as isopentenyl diphosphate (IPP) and dimethylallyl diphosphate (DMAPP).</text>
</comment>
<comment type="catalytic activity">
    <reaction evidence="1">
        <text>(R)-5-phosphomevalonate = (2E)-3-methyl-5-phosphooxypent-2-enoate + H2O</text>
        <dbReference type="Rhea" id="RHEA:78975"/>
        <dbReference type="ChEBI" id="CHEBI:15377"/>
        <dbReference type="ChEBI" id="CHEBI:58146"/>
        <dbReference type="ChEBI" id="CHEBI:229665"/>
        <dbReference type="EC" id="4.2.1.182"/>
    </reaction>
    <physiologicalReaction direction="left-to-right" evidence="1">
        <dbReference type="Rhea" id="RHEA:78976"/>
    </physiologicalReaction>
</comment>
<comment type="pathway">
    <text evidence="1">Isoprenoid biosynthesis; isopentenyl diphosphate biosynthesis via mevalonate pathway.</text>
</comment>
<comment type="subunit">
    <text evidence="1">Heterodimer composed of a large subunit (PMDh-L) and a small subunit (PMDh-S).</text>
</comment>
<comment type="similarity">
    <text evidence="1">Belongs to the AcnX type II small subunit family.</text>
</comment>
<name>PMDHS_METAC</name>
<organism>
    <name type="scientific">Methanosarcina acetivorans (strain ATCC 35395 / DSM 2834 / JCM 12185 / C2A)</name>
    <dbReference type="NCBI Taxonomy" id="188937"/>
    <lineage>
        <taxon>Archaea</taxon>
        <taxon>Methanobacteriati</taxon>
        <taxon>Methanobacteriota</taxon>
        <taxon>Stenosarchaea group</taxon>
        <taxon>Methanomicrobia</taxon>
        <taxon>Methanosarcinales</taxon>
        <taxon>Methanosarcinaceae</taxon>
        <taxon>Methanosarcina</taxon>
    </lineage>
</organism>
<sequence>MVPIKLKGRTISRGCAEGEILISRDPISFLGSVDPKTGIVVEEKHSLAGKSIKGKVLVFPHGKGSTVGSYVMYQLKKNGAAPVAIINLETEPIVAVGAIISEIPLVDMLEKSPYESLKDGDVVQVNGSEGYIELIKPKGSKIEE</sequence>
<gene>
    <name type="ordered locus">MA_0244</name>
</gene>
<evidence type="ECO:0000255" key="1">
    <source>
        <dbReference type="HAMAP-Rule" id="MF_00078"/>
    </source>
</evidence>
<feature type="chain" id="PRO_0000152564" description="Phosphomevalonate dehydratase small subunit">
    <location>
        <begin position="1"/>
        <end position="144"/>
    </location>
</feature>
<feature type="active site" description="Proton acceptor" evidence="1">
    <location>
        <position position="65"/>
    </location>
</feature>
<accession>Q8TU30</accession>
<reference key="1">
    <citation type="journal article" date="2002" name="Genome Res.">
        <title>The genome of Methanosarcina acetivorans reveals extensive metabolic and physiological diversity.</title>
        <authorList>
            <person name="Galagan J.E."/>
            <person name="Nusbaum C."/>
            <person name="Roy A."/>
            <person name="Endrizzi M.G."/>
            <person name="Macdonald P."/>
            <person name="FitzHugh W."/>
            <person name="Calvo S."/>
            <person name="Engels R."/>
            <person name="Smirnov S."/>
            <person name="Atnoor D."/>
            <person name="Brown A."/>
            <person name="Allen N."/>
            <person name="Naylor J."/>
            <person name="Stange-Thomann N."/>
            <person name="DeArellano K."/>
            <person name="Johnson R."/>
            <person name="Linton L."/>
            <person name="McEwan P."/>
            <person name="McKernan K."/>
            <person name="Talamas J."/>
            <person name="Tirrell A."/>
            <person name="Ye W."/>
            <person name="Zimmer A."/>
            <person name="Barber R.D."/>
            <person name="Cann I."/>
            <person name="Graham D.E."/>
            <person name="Grahame D.A."/>
            <person name="Guss A.M."/>
            <person name="Hedderich R."/>
            <person name="Ingram-Smith C."/>
            <person name="Kuettner H.C."/>
            <person name="Krzycki J.A."/>
            <person name="Leigh J.A."/>
            <person name="Li W."/>
            <person name="Liu J."/>
            <person name="Mukhopadhyay B."/>
            <person name="Reeve J.N."/>
            <person name="Smith K."/>
            <person name="Springer T.A."/>
            <person name="Umayam L.A."/>
            <person name="White O."/>
            <person name="White R.H."/>
            <person name="de Macario E.C."/>
            <person name="Ferry J.G."/>
            <person name="Jarrell K.F."/>
            <person name="Jing H."/>
            <person name="Macario A.J.L."/>
            <person name="Paulsen I.T."/>
            <person name="Pritchett M."/>
            <person name="Sowers K.R."/>
            <person name="Swanson R.V."/>
            <person name="Zinder S.H."/>
            <person name="Lander E."/>
            <person name="Metcalf W.W."/>
            <person name="Birren B."/>
        </authorList>
    </citation>
    <scope>NUCLEOTIDE SEQUENCE [LARGE SCALE GENOMIC DNA]</scope>
    <source>
        <strain>ATCC 35395 / DSM 2834 / JCM 12185 / C2A</strain>
    </source>
</reference>
<keyword id="KW-0414">Isoprene biosynthesis</keyword>
<keyword id="KW-0456">Lyase</keyword>
<keyword id="KW-1185">Reference proteome</keyword>
<protein>
    <recommendedName>
        <fullName evidence="1">Phosphomevalonate dehydratase small subunit</fullName>
        <shortName evidence="1">PMDh small subunit</shortName>
        <shortName evidence="1">PMDh-S</shortName>
        <ecNumber evidence="1">4.2.1.182</ecNumber>
    </recommendedName>
</protein>